<sequence>MAHKKGQGSTQNNRDSIGRRLGVKKFGGEFVRAGNIIIRQRGTATHAGNNVGMGKDHTIFALIDGFVKFERKDKDRKKVSVYPA</sequence>
<keyword id="KW-0687">Ribonucleoprotein</keyword>
<keyword id="KW-0689">Ribosomal protein</keyword>
<organism>
    <name type="scientific">Campylobacter jejuni subsp. doylei (strain ATCC BAA-1458 / RM4099 / 269.97)</name>
    <dbReference type="NCBI Taxonomy" id="360109"/>
    <lineage>
        <taxon>Bacteria</taxon>
        <taxon>Pseudomonadati</taxon>
        <taxon>Campylobacterota</taxon>
        <taxon>Epsilonproteobacteria</taxon>
        <taxon>Campylobacterales</taxon>
        <taxon>Campylobacteraceae</taxon>
        <taxon>Campylobacter</taxon>
    </lineage>
</organism>
<name>RL27_CAMJD</name>
<proteinExistence type="inferred from homology"/>
<gene>
    <name evidence="1" type="primary">rpmA</name>
    <name type="ordered locus">JJD26997_0099</name>
</gene>
<reference key="1">
    <citation type="submission" date="2007-07" db="EMBL/GenBank/DDBJ databases">
        <title>Complete genome sequence of Campylobacter jejuni subsp doylei 269.97 isolated from human blood.</title>
        <authorList>
            <person name="Fouts D.E."/>
            <person name="Mongodin E.F."/>
            <person name="Puiu D."/>
            <person name="Sebastian Y."/>
            <person name="Miller W.G."/>
            <person name="Mandrell R.E."/>
            <person name="Lastovica A.J."/>
            <person name="Nelson K.E."/>
        </authorList>
    </citation>
    <scope>NUCLEOTIDE SEQUENCE [LARGE SCALE GENOMIC DNA]</scope>
    <source>
        <strain>ATCC BAA-1458 / RM4099 / 269.97</strain>
    </source>
</reference>
<evidence type="ECO:0000255" key="1">
    <source>
        <dbReference type="HAMAP-Rule" id="MF_00539"/>
    </source>
</evidence>
<evidence type="ECO:0000305" key="2"/>
<accession>A7H1G9</accession>
<feature type="chain" id="PRO_1000017443" description="Large ribosomal subunit protein bL27">
    <location>
        <begin position="1"/>
        <end position="84"/>
    </location>
</feature>
<dbReference type="EMBL" id="CP000768">
    <property type="protein sequence ID" value="ABS43750.1"/>
    <property type="molecule type" value="Genomic_DNA"/>
</dbReference>
<dbReference type="SMR" id="A7H1G9"/>
<dbReference type="KEGG" id="cjd:JJD26997_0099"/>
<dbReference type="HOGENOM" id="CLU_095424_4_0_7"/>
<dbReference type="Proteomes" id="UP000002302">
    <property type="component" value="Chromosome"/>
</dbReference>
<dbReference type="GO" id="GO:0022625">
    <property type="term" value="C:cytosolic large ribosomal subunit"/>
    <property type="evidence" value="ECO:0007669"/>
    <property type="project" value="TreeGrafter"/>
</dbReference>
<dbReference type="GO" id="GO:0003735">
    <property type="term" value="F:structural constituent of ribosome"/>
    <property type="evidence" value="ECO:0007669"/>
    <property type="project" value="InterPro"/>
</dbReference>
<dbReference type="GO" id="GO:0006412">
    <property type="term" value="P:translation"/>
    <property type="evidence" value="ECO:0007669"/>
    <property type="project" value="UniProtKB-UniRule"/>
</dbReference>
<dbReference type="FunFam" id="2.40.50.100:FF:000004">
    <property type="entry name" value="50S ribosomal protein L27"/>
    <property type="match status" value="1"/>
</dbReference>
<dbReference type="Gene3D" id="2.40.50.100">
    <property type="match status" value="1"/>
</dbReference>
<dbReference type="HAMAP" id="MF_00539">
    <property type="entry name" value="Ribosomal_bL27"/>
    <property type="match status" value="1"/>
</dbReference>
<dbReference type="InterPro" id="IPR001684">
    <property type="entry name" value="Ribosomal_bL27"/>
</dbReference>
<dbReference type="InterPro" id="IPR018261">
    <property type="entry name" value="Ribosomal_bL27_CS"/>
</dbReference>
<dbReference type="NCBIfam" id="TIGR00062">
    <property type="entry name" value="L27"/>
    <property type="match status" value="1"/>
</dbReference>
<dbReference type="PANTHER" id="PTHR15893:SF0">
    <property type="entry name" value="LARGE RIBOSOMAL SUBUNIT PROTEIN BL27M"/>
    <property type="match status" value="1"/>
</dbReference>
<dbReference type="PANTHER" id="PTHR15893">
    <property type="entry name" value="RIBOSOMAL PROTEIN L27"/>
    <property type="match status" value="1"/>
</dbReference>
<dbReference type="Pfam" id="PF01016">
    <property type="entry name" value="Ribosomal_L27"/>
    <property type="match status" value="1"/>
</dbReference>
<dbReference type="PRINTS" id="PR00063">
    <property type="entry name" value="RIBOSOMALL27"/>
</dbReference>
<dbReference type="SUPFAM" id="SSF110324">
    <property type="entry name" value="Ribosomal L27 protein-like"/>
    <property type="match status" value="1"/>
</dbReference>
<dbReference type="PROSITE" id="PS00831">
    <property type="entry name" value="RIBOSOMAL_L27"/>
    <property type="match status" value="1"/>
</dbReference>
<comment type="similarity">
    <text evidence="1">Belongs to the bacterial ribosomal protein bL27 family.</text>
</comment>
<protein>
    <recommendedName>
        <fullName evidence="1">Large ribosomal subunit protein bL27</fullName>
    </recommendedName>
    <alternativeName>
        <fullName evidence="2">50S ribosomal protein L27</fullName>
    </alternativeName>
</protein>